<organism>
    <name type="scientific">Brucella abortus biovar 1 (strain 9-941)</name>
    <dbReference type="NCBI Taxonomy" id="262698"/>
    <lineage>
        <taxon>Bacteria</taxon>
        <taxon>Pseudomonadati</taxon>
        <taxon>Pseudomonadota</taxon>
        <taxon>Alphaproteobacteria</taxon>
        <taxon>Hyphomicrobiales</taxon>
        <taxon>Brucellaceae</taxon>
        <taxon>Brucella/Ochrobactrum group</taxon>
        <taxon>Brucella</taxon>
    </lineage>
</organism>
<dbReference type="EMBL" id="AE017223">
    <property type="protein sequence ID" value="AAX74558.1"/>
    <property type="molecule type" value="Genomic_DNA"/>
</dbReference>
<dbReference type="RefSeq" id="WP_002967737.1">
    <property type="nucleotide sequence ID" value="NC_006932.1"/>
</dbReference>
<dbReference type="SMR" id="Q57CS6"/>
<dbReference type="EnsemblBacteria" id="AAX74558">
    <property type="protein sequence ID" value="AAX74558"/>
    <property type="gene ID" value="BruAb1_1220"/>
</dbReference>
<dbReference type="GeneID" id="97533542"/>
<dbReference type="KEGG" id="bmb:BruAb1_1220"/>
<dbReference type="HOGENOM" id="CLU_131047_1_2_5"/>
<dbReference type="Proteomes" id="UP000000540">
    <property type="component" value="Chromosome I"/>
</dbReference>
<dbReference type="GO" id="GO:0022625">
    <property type="term" value="C:cytosolic large ribosomal subunit"/>
    <property type="evidence" value="ECO:0007669"/>
    <property type="project" value="TreeGrafter"/>
</dbReference>
<dbReference type="GO" id="GO:0003735">
    <property type="term" value="F:structural constituent of ribosome"/>
    <property type="evidence" value="ECO:0007669"/>
    <property type="project" value="InterPro"/>
</dbReference>
<dbReference type="GO" id="GO:0006412">
    <property type="term" value="P:translation"/>
    <property type="evidence" value="ECO:0007669"/>
    <property type="project" value="UniProtKB-UniRule"/>
</dbReference>
<dbReference type="CDD" id="cd01658">
    <property type="entry name" value="Ribosomal_L30"/>
    <property type="match status" value="1"/>
</dbReference>
<dbReference type="Gene3D" id="3.30.1390.20">
    <property type="entry name" value="Ribosomal protein L30, ferredoxin-like fold domain"/>
    <property type="match status" value="1"/>
</dbReference>
<dbReference type="HAMAP" id="MF_01371_B">
    <property type="entry name" value="Ribosomal_uL30_B"/>
    <property type="match status" value="1"/>
</dbReference>
<dbReference type="InterPro" id="IPR036919">
    <property type="entry name" value="Ribo_uL30_ferredoxin-like_sf"/>
</dbReference>
<dbReference type="InterPro" id="IPR005996">
    <property type="entry name" value="Ribosomal_uL30_bac-type"/>
</dbReference>
<dbReference type="InterPro" id="IPR016082">
    <property type="entry name" value="Ribosomal_uL30_ferredoxin-like"/>
</dbReference>
<dbReference type="NCBIfam" id="TIGR01308">
    <property type="entry name" value="rpmD_bact"/>
    <property type="match status" value="1"/>
</dbReference>
<dbReference type="PANTHER" id="PTHR15892:SF2">
    <property type="entry name" value="LARGE RIBOSOMAL SUBUNIT PROTEIN UL30M"/>
    <property type="match status" value="1"/>
</dbReference>
<dbReference type="PANTHER" id="PTHR15892">
    <property type="entry name" value="MITOCHONDRIAL RIBOSOMAL PROTEIN L30"/>
    <property type="match status" value="1"/>
</dbReference>
<dbReference type="Pfam" id="PF00327">
    <property type="entry name" value="Ribosomal_L30"/>
    <property type="match status" value="1"/>
</dbReference>
<dbReference type="PIRSF" id="PIRSF002211">
    <property type="entry name" value="Ribosomal_L30_bac-type"/>
    <property type="match status" value="1"/>
</dbReference>
<dbReference type="SUPFAM" id="SSF55129">
    <property type="entry name" value="Ribosomal protein L30p/L7e"/>
    <property type="match status" value="1"/>
</dbReference>
<evidence type="ECO:0000255" key="1">
    <source>
        <dbReference type="HAMAP-Rule" id="MF_01371"/>
    </source>
</evidence>
<evidence type="ECO:0000305" key="2"/>
<keyword id="KW-0687">Ribonucleoprotein</keyword>
<keyword id="KW-0689">Ribosomal protein</keyword>
<accession>Q57CS6</accession>
<comment type="subunit">
    <text evidence="1">Part of the 50S ribosomal subunit.</text>
</comment>
<comment type="similarity">
    <text evidence="1">Belongs to the universal ribosomal protein uL30 family.</text>
</comment>
<gene>
    <name evidence="1" type="primary">rpmD</name>
    <name type="ordered locus">BruAb1_1220</name>
</gene>
<name>RL30_BRUAB</name>
<reference key="1">
    <citation type="journal article" date="2005" name="J. Bacteriol.">
        <title>Completion of the genome sequence of Brucella abortus and comparison to the highly similar genomes of Brucella melitensis and Brucella suis.</title>
        <authorList>
            <person name="Halling S.M."/>
            <person name="Peterson-Burch B.D."/>
            <person name="Bricker B.J."/>
            <person name="Zuerner R.L."/>
            <person name="Qing Z."/>
            <person name="Li L.-L."/>
            <person name="Kapur V."/>
            <person name="Alt D.P."/>
            <person name="Olsen S.C."/>
        </authorList>
    </citation>
    <scope>NUCLEOTIDE SEQUENCE [LARGE SCALE GENOMIC DNA]</scope>
    <source>
        <strain>9-941</strain>
    </source>
</reference>
<feature type="chain" id="PRO_0000347082" description="Large ribosomal subunit protein uL30">
    <location>
        <begin position="1"/>
        <end position="65"/>
    </location>
</feature>
<sequence>MAEKKGKTVTVEQIGSPIRRPAEQRATLIGLGLNKMHRRSTLEDTPAVRGMIAKLPHLVRVVDEA</sequence>
<protein>
    <recommendedName>
        <fullName evidence="1">Large ribosomal subunit protein uL30</fullName>
    </recommendedName>
    <alternativeName>
        <fullName evidence="2">50S ribosomal protein L30</fullName>
    </alternativeName>
</protein>
<proteinExistence type="inferred from homology"/>